<feature type="chain" id="PRO_0000142485" description="Eukaryotic translation initiation factor 5A-1">
    <location>
        <begin position="1"/>
        <end position="157"/>
    </location>
</feature>
<feature type="modified residue" description="Hypusine" evidence="1">
    <location>
        <position position="52"/>
    </location>
</feature>
<feature type="modified residue" description="Phosphoserine" evidence="2">
    <location>
        <position position="75"/>
    </location>
</feature>
<feature type="modified residue" description="Phosphoserine" evidence="2">
    <location>
        <position position="77"/>
    </location>
</feature>
<feature type="modified residue" description="Phosphothreonine" evidence="2">
    <location>
        <position position="78"/>
    </location>
</feature>
<accession>P56289</accession>
<accession>Q76N36</accession>
<name>IF5A1_SCHPO</name>
<evidence type="ECO:0000250" key="1">
    <source>
        <dbReference type="UniProtKB" id="P23301"/>
    </source>
</evidence>
<evidence type="ECO:0000269" key="2">
    <source>
    </source>
</evidence>
<evidence type="ECO:0000305" key="3"/>
<dbReference type="EMBL" id="CU329670">
    <property type="protein sequence ID" value="CAB16195.1"/>
    <property type="molecule type" value="Genomic_DNA"/>
</dbReference>
<dbReference type="EMBL" id="AB009604">
    <property type="protein sequence ID" value="BAA24001.1"/>
    <property type="molecule type" value="mRNA"/>
</dbReference>
<dbReference type="PIR" id="T38429">
    <property type="entry name" value="T38429"/>
</dbReference>
<dbReference type="PIR" id="T43305">
    <property type="entry name" value="T43305"/>
</dbReference>
<dbReference type="RefSeq" id="NP_594457.1">
    <property type="nucleotide sequence ID" value="NM_001019886.2"/>
</dbReference>
<dbReference type="SMR" id="P56289"/>
<dbReference type="BioGRID" id="279147">
    <property type="interactions" value="8"/>
</dbReference>
<dbReference type="FunCoup" id="P56289">
    <property type="interactions" value="433"/>
</dbReference>
<dbReference type="STRING" id="284812.P56289"/>
<dbReference type="iPTMnet" id="P56289"/>
<dbReference type="PaxDb" id="4896-SPAC26H5.10c.1"/>
<dbReference type="EnsemblFungi" id="SPAC26H5.10c.1">
    <property type="protein sequence ID" value="SPAC26H5.10c.1:pep"/>
    <property type="gene ID" value="SPAC26H5.10c"/>
</dbReference>
<dbReference type="GeneID" id="2542694"/>
<dbReference type="KEGG" id="spo:2542694"/>
<dbReference type="PomBase" id="SPAC26H5.10c"/>
<dbReference type="VEuPathDB" id="FungiDB:SPAC26H5.10c"/>
<dbReference type="eggNOG" id="KOG3271">
    <property type="taxonomic scope" value="Eukaryota"/>
</dbReference>
<dbReference type="HOGENOM" id="CLU_102600_1_0_1"/>
<dbReference type="InParanoid" id="P56289"/>
<dbReference type="OMA" id="AKCHFTA"/>
<dbReference type="PhylomeDB" id="P56289"/>
<dbReference type="Reactome" id="R-SPO-204626">
    <property type="pathway name" value="Hypusine synthesis from eIF5A-lysine"/>
</dbReference>
<dbReference type="PRO" id="PR:P56289"/>
<dbReference type="Proteomes" id="UP000002485">
    <property type="component" value="Chromosome I"/>
</dbReference>
<dbReference type="GO" id="GO:0005829">
    <property type="term" value="C:cytosol"/>
    <property type="evidence" value="ECO:0007005"/>
    <property type="project" value="PomBase"/>
</dbReference>
<dbReference type="GO" id="GO:0005730">
    <property type="term" value="C:nucleolus"/>
    <property type="evidence" value="ECO:0007005"/>
    <property type="project" value="PomBase"/>
</dbReference>
<dbReference type="GO" id="GO:0005634">
    <property type="term" value="C:nucleus"/>
    <property type="evidence" value="ECO:0007005"/>
    <property type="project" value="PomBase"/>
</dbReference>
<dbReference type="GO" id="GO:0032991">
    <property type="term" value="C:protein-containing complex"/>
    <property type="evidence" value="ECO:0007669"/>
    <property type="project" value="UniProtKB-ARBA"/>
</dbReference>
<dbReference type="GO" id="GO:0043022">
    <property type="term" value="F:ribosome binding"/>
    <property type="evidence" value="ECO:0000266"/>
    <property type="project" value="PomBase"/>
</dbReference>
<dbReference type="GO" id="GO:0003723">
    <property type="term" value="F:RNA binding"/>
    <property type="evidence" value="ECO:0000266"/>
    <property type="project" value="PomBase"/>
</dbReference>
<dbReference type="GO" id="GO:0003746">
    <property type="term" value="F:translation elongation factor activity"/>
    <property type="evidence" value="ECO:0000318"/>
    <property type="project" value="GO_Central"/>
</dbReference>
<dbReference type="GO" id="GO:0008079">
    <property type="term" value="F:translation termination factor activity"/>
    <property type="evidence" value="ECO:0000266"/>
    <property type="project" value="PomBase"/>
</dbReference>
<dbReference type="GO" id="GO:0002182">
    <property type="term" value="P:cytoplasmic translational elongation"/>
    <property type="evidence" value="ECO:0000266"/>
    <property type="project" value="PomBase"/>
</dbReference>
<dbReference type="GO" id="GO:0002184">
    <property type="term" value="P:cytoplasmic translational termination"/>
    <property type="evidence" value="ECO:0000266"/>
    <property type="project" value="PomBase"/>
</dbReference>
<dbReference type="GO" id="GO:0045901">
    <property type="term" value="P:positive regulation of translational elongation"/>
    <property type="evidence" value="ECO:0007669"/>
    <property type="project" value="InterPro"/>
</dbReference>
<dbReference type="GO" id="GO:0045905">
    <property type="term" value="P:positive regulation of translational termination"/>
    <property type="evidence" value="ECO:0007669"/>
    <property type="project" value="InterPro"/>
</dbReference>
<dbReference type="GO" id="GO:0006414">
    <property type="term" value="P:translational elongation"/>
    <property type="evidence" value="ECO:0000318"/>
    <property type="project" value="GO_Central"/>
</dbReference>
<dbReference type="CDD" id="cd04468">
    <property type="entry name" value="S1_eIF5A"/>
    <property type="match status" value="1"/>
</dbReference>
<dbReference type="FunFam" id="2.30.30.30:FF:000007">
    <property type="entry name" value="Eukaryotic translation initiation factor 5A"/>
    <property type="match status" value="1"/>
</dbReference>
<dbReference type="FunFam" id="2.40.50.140:FF:000034">
    <property type="entry name" value="Eukaryotic translation initiation factor 5A"/>
    <property type="match status" value="1"/>
</dbReference>
<dbReference type="Gene3D" id="2.30.30.30">
    <property type="match status" value="1"/>
</dbReference>
<dbReference type="Gene3D" id="2.40.50.140">
    <property type="entry name" value="Nucleic acid-binding proteins"/>
    <property type="match status" value="1"/>
</dbReference>
<dbReference type="InterPro" id="IPR001884">
    <property type="entry name" value="IF5A-like"/>
</dbReference>
<dbReference type="InterPro" id="IPR048670">
    <property type="entry name" value="IF5A-like_N"/>
</dbReference>
<dbReference type="InterPro" id="IPR012340">
    <property type="entry name" value="NA-bd_OB-fold"/>
</dbReference>
<dbReference type="InterPro" id="IPR014722">
    <property type="entry name" value="Rib_uL2_dom2"/>
</dbReference>
<dbReference type="InterPro" id="IPR019769">
    <property type="entry name" value="Trans_elong_IF5A_hypusine_site"/>
</dbReference>
<dbReference type="InterPro" id="IPR020189">
    <property type="entry name" value="Transl_elong_IF5A_C"/>
</dbReference>
<dbReference type="InterPro" id="IPR008991">
    <property type="entry name" value="Translation_prot_SH3-like_sf"/>
</dbReference>
<dbReference type="NCBIfam" id="TIGR00037">
    <property type="entry name" value="eIF_5A"/>
    <property type="match status" value="1"/>
</dbReference>
<dbReference type="PANTHER" id="PTHR11673">
    <property type="entry name" value="TRANSLATION INITIATION FACTOR 5A FAMILY MEMBER"/>
    <property type="match status" value="1"/>
</dbReference>
<dbReference type="Pfam" id="PF01287">
    <property type="entry name" value="eIF-5a"/>
    <property type="match status" value="1"/>
</dbReference>
<dbReference type="Pfam" id="PF21485">
    <property type="entry name" value="IF5A-like_N"/>
    <property type="match status" value="1"/>
</dbReference>
<dbReference type="PIRSF" id="PIRSF003025">
    <property type="entry name" value="eIF5A"/>
    <property type="match status" value="1"/>
</dbReference>
<dbReference type="SMART" id="SM01376">
    <property type="entry name" value="eIF-5a"/>
    <property type="match status" value="1"/>
</dbReference>
<dbReference type="SUPFAM" id="SSF50249">
    <property type="entry name" value="Nucleic acid-binding proteins"/>
    <property type="match status" value="1"/>
</dbReference>
<dbReference type="SUPFAM" id="SSF50104">
    <property type="entry name" value="Translation proteins SH3-like domain"/>
    <property type="match status" value="1"/>
</dbReference>
<dbReference type="PROSITE" id="PS00302">
    <property type="entry name" value="IF5A_HYPUSINE"/>
    <property type="match status" value="1"/>
</dbReference>
<gene>
    <name type="primary">tif51a</name>
    <name type="synonym">tif51</name>
    <name type="ORF">SPAC26H5.10c</name>
</gene>
<organism>
    <name type="scientific">Schizosaccharomyces pombe (strain 972 / ATCC 24843)</name>
    <name type="common">Fission yeast</name>
    <dbReference type="NCBI Taxonomy" id="284812"/>
    <lineage>
        <taxon>Eukaryota</taxon>
        <taxon>Fungi</taxon>
        <taxon>Dikarya</taxon>
        <taxon>Ascomycota</taxon>
        <taxon>Taphrinomycotina</taxon>
        <taxon>Schizosaccharomycetes</taxon>
        <taxon>Schizosaccharomycetales</taxon>
        <taxon>Schizosaccharomycetaceae</taxon>
        <taxon>Schizosaccharomyces</taxon>
    </lineage>
</organism>
<protein>
    <recommendedName>
        <fullName>Eukaryotic translation initiation factor 5A-1</fullName>
        <shortName>eIF-5A-1</shortName>
    </recommendedName>
</protein>
<reference key="1">
    <citation type="journal article" date="2002" name="Nature">
        <title>The genome sequence of Schizosaccharomyces pombe.</title>
        <authorList>
            <person name="Wood V."/>
            <person name="Gwilliam R."/>
            <person name="Rajandream M.A."/>
            <person name="Lyne M.H."/>
            <person name="Lyne R."/>
            <person name="Stewart A."/>
            <person name="Sgouros J.G."/>
            <person name="Peat N."/>
            <person name="Hayles J."/>
            <person name="Baker S.G."/>
            <person name="Basham D."/>
            <person name="Bowman S."/>
            <person name="Brooks K."/>
            <person name="Brown D."/>
            <person name="Brown S."/>
            <person name="Chillingworth T."/>
            <person name="Churcher C.M."/>
            <person name="Collins M."/>
            <person name="Connor R."/>
            <person name="Cronin A."/>
            <person name="Davis P."/>
            <person name="Feltwell T."/>
            <person name="Fraser A."/>
            <person name="Gentles S."/>
            <person name="Goble A."/>
            <person name="Hamlin N."/>
            <person name="Harris D.E."/>
            <person name="Hidalgo J."/>
            <person name="Hodgson G."/>
            <person name="Holroyd S."/>
            <person name="Hornsby T."/>
            <person name="Howarth S."/>
            <person name="Huckle E.J."/>
            <person name="Hunt S."/>
            <person name="Jagels K."/>
            <person name="James K.D."/>
            <person name="Jones L."/>
            <person name="Jones M."/>
            <person name="Leather S."/>
            <person name="McDonald S."/>
            <person name="McLean J."/>
            <person name="Mooney P."/>
            <person name="Moule S."/>
            <person name="Mungall K.L."/>
            <person name="Murphy L.D."/>
            <person name="Niblett D."/>
            <person name="Odell C."/>
            <person name="Oliver K."/>
            <person name="O'Neil S."/>
            <person name="Pearson D."/>
            <person name="Quail M.A."/>
            <person name="Rabbinowitsch E."/>
            <person name="Rutherford K.M."/>
            <person name="Rutter S."/>
            <person name="Saunders D."/>
            <person name="Seeger K."/>
            <person name="Sharp S."/>
            <person name="Skelton J."/>
            <person name="Simmonds M.N."/>
            <person name="Squares R."/>
            <person name="Squares S."/>
            <person name="Stevens K."/>
            <person name="Taylor K."/>
            <person name="Taylor R.G."/>
            <person name="Tivey A."/>
            <person name="Walsh S.V."/>
            <person name="Warren T."/>
            <person name="Whitehead S."/>
            <person name="Woodward J.R."/>
            <person name="Volckaert G."/>
            <person name="Aert R."/>
            <person name="Robben J."/>
            <person name="Grymonprez B."/>
            <person name="Weltjens I."/>
            <person name="Vanstreels E."/>
            <person name="Rieger M."/>
            <person name="Schaefer M."/>
            <person name="Mueller-Auer S."/>
            <person name="Gabel C."/>
            <person name="Fuchs M."/>
            <person name="Duesterhoeft A."/>
            <person name="Fritzc C."/>
            <person name="Holzer E."/>
            <person name="Moestl D."/>
            <person name="Hilbert H."/>
            <person name="Borzym K."/>
            <person name="Langer I."/>
            <person name="Beck A."/>
            <person name="Lehrach H."/>
            <person name="Reinhardt R."/>
            <person name="Pohl T.M."/>
            <person name="Eger P."/>
            <person name="Zimmermann W."/>
            <person name="Wedler H."/>
            <person name="Wambutt R."/>
            <person name="Purnelle B."/>
            <person name="Goffeau A."/>
            <person name="Cadieu E."/>
            <person name="Dreano S."/>
            <person name="Gloux S."/>
            <person name="Lelaure V."/>
            <person name="Mottier S."/>
            <person name="Galibert F."/>
            <person name="Aves S.J."/>
            <person name="Xiang Z."/>
            <person name="Hunt C."/>
            <person name="Moore K."/>
            <person name="Hurst S.M."/>
            <person name="Lucas M."/>
            <person name="Rochet M."/>
            <person name="Gaillardin C."/>
            <person name="Tallada V.A."/>
            <person name="Garzon A."/>
            <person name="Thode G."/>
            <person name="Daga R.R."/>
            <person name="Cruzado L."/>
            <person name="Jimenez J."/>
            <person name="Sanchez M."/>
            <person name="del Rey F."/>
            <person name="Benito J."/>
            <person name="Dominguez A."/>
            <person name="Revuelta J.L."/>
            <person name="Moreno S."/>
            <person name="Armstrong J."/>
            <person name="Forsburg S.L."/>
            <person name="Cerutti L."/>
            <person name="Lowe T."/>
            <person name="McCombie W.R."/>
            <person name="Paulsen I."/>
            <person name="Potashkin J."/>
            <person name="Shpakovski G.V."/>
            <person name="Ussery D."/>
            <person name="Barrell B.G."/>
            <person name="Nurse P."/>
        </authorList>
    </citation>
    <scope>NUCLEOTIDE SEQUENCE [LARGE SCALE GENOMIC DNA]</scope>
    <source>
        <strain>972 / ATCC 24843</strain>
    </source>
</reference>
<reference key="2">
    <citation type="submission" date="1997-12" db="EMBL/GenBank/DDBJ databases">
        <title>S. pombe eIF5A.</title>
        <authorList>
            <person name="Kawamukai M."/>
        </authorList>
    </citation>
    <scope>NUCLEOTIDE SEQUENCE [MRNA] OF 125-157</scope>
</reference>
<reference key="3">
    <citation type="journal article" date="2008" name="J. Proteome Res.">
        <title>Phosphoproteome analysis of fission yeast.</title>
        <authorList>
            <person name="Wilson-Grady J.T."/>
            <person name="Villen J."/>
            <person name="Gygi S.P."/>
        </authorList>
    </citation>
    <scope>PHOSPHORYLATION [LARGE SCALE ANALYSIS] AT SER-75; SER-77 AND THR-78</scope>
    <scope>IDENTIFICATION BY MASS SPECTROMETRY</scope>
</reference>
<proteinExistence type="evidence at protein level"/>
<comment type="function">
    <text evidence="1">Translation factor that promotes translation elongation and termination, particularly upon ribosome stalling at specific amino acid sequence contexts. Binds between the exit (E) and peptidyl (P) site of the ribosome and promotes rescue of stalled ribosome: specifically required for efficient translation of polyproline-containing peptides as well as other motifs that stall the ribosome. Acts as a ribosome quality control (RQC) cofactor by joining the RQC complex to facilitate peptidyl transfer during CAT tailing step.</text>
</comment>
<comment type="subcellular location">
    <subcellularLocation>
        <location evidence="1">Cytoplasm</location>
    </subcellularLocation>
</comment>
<comment type="PTM">
    <text evidence="1">Lys-52 undergoes hypusination, a unique post-translational modification that consists in the addition of a butylamino group from spermidine to lysine side chain, leading to the formation of the unusual amino acid hypusine. eIF-5As are the only known proteins to undergo this modification, which is essential for their function.</text>
</comment>
<comment type="miscellaneous">
    <text>There are two genes for eIF-5A in S.pombe.</text>
</comment>
<comment type="similarity">
    <text evidence="3">Belongs to the eIF-5A family.</text>
</comment>
<sequence length="157" mass="17152">MAEEEHVDFEGGEAGASLTFPMQCSALRKNGHVVIKGRPCKIVDMSTSKTGKHGHAKVHIVALDIFNGRKYEDMSPSTHNMDVPVVKRDEYQLVNIDDGYLNLMTTDGTTKDDVRLPEGELGNEIEEGFDEGRDLIITVVSAMGEETALACRDAPSS</sequence>
<keyword id="KW-0963">Cytoplasm</keyword>
<keyword id="KW-0251">Elongation factor</keyword>
<keyword id="KW-0385">Hypusine</keyword>
<keyword id="KW-0597">Phosphoprotein</keyword>
<keyword id="KW-0648">Protein biosynthesis</keyword>
<keyword id="KW-1185">Reference proteome</keyword>
<keyword id="KW-0694">RNA-binding</keyword>